<organism>
    <name type="scientific">Bos taurus</name>
    <name type="common">Bovine</name>
    <dbReference type="NCBI Taxonomy" id="9913"/>
    <lineage>
        <taxon>Eukaryota</taxon>
        <taxon>Metazoa</taxon>
        <taxon>Chordata</taxon>
        <taxon>Craniata</taxon>
        <taxon>Vertebrata</taxon>
        <taxon>Euteleostomi</taxon>
        <taxon>Mammalia</taxon>
        <taxon>Eutheria</taxon>
        <taxon>Laurasiatheria</taxon>
        <taxon>Artiodactyla</taxon>
        <taxon>Ruminantia</taxon>
        <taxon>Pecora</taxon>
        <taxon>Bovidae</taxon>
        <taxon>Bovinae</taxon>
        <taxon>Bos</taxon>
    </lineage>
</organism>
<evidence type="ECO:0000250" key="1">
    <source>
        <dbReference type="UniProtKB" id="Q6IQ20"/>
    </source>
</evidence>
<evidence type="ECO:0000250" key="2">
    <source>
        <dbReference type="UniProtKB" id="Q769K2"/>
    </source>
</evidence>
<evidence type="ECO:0000250" key="3">
    <source>
        <dbReference type="UniProtKB" id="Q8BH82"/>
    </source>
</evidence>
<evidence type="ECO:0000256" key="4">
    <source>
        <dbReference type="SAM" id="MobiDB-lite"/>
    </source>
</evidence>
<evidence type="ECO:0000305" key="5"/>
<comment type="function">
    <text evidence="1 3">D-type phospholipase that hydrolyzes N-acyl-phosphatidylethanolamines (NAPEs) to produce bioactive N-acylethanolamines/fatty acid ethanolamides (NAEs/FAEs) and phosphatidic acid (By similarity). Cleaves the terminal phosphodiester bond of diacyl- and alkenylacyl-NAPEs, primarily playing a role in the generation of long-chain saturated and monounsaturated NAEs in the brain (By similarity). May control NAPE homeostasis in dopaminergic neuron membranes and regulate neuron survival, partly through RAC1 activation (By similarity). As a regulator of lipid metabolism in the adipose tissue, mediates the crosstalk between adipocytes, gut microbiota and immune cells to control body temperature and weight. In particular, regulates energy homeostasis by promoting cold-induced brown or beige adipocyte differentiation program to generate heat from fatty acids and glucose. Has limited D-type phospholipase activity toward N-acyl lyso-NAPEs (By similarity).</text>
</comment>
<comment type="catalytic activity">
    <reaction evidence="1 3">
        <text>an N-acyl-1,2-diacyl-sn-glycero-3-phosphoethanolamine + H2O = an N-acylethanolamine + a 1,2-diacyl-sn-glycero-3-phosphate + H(+)</text>
        <dbReference type="Rhea" id="RHEA:33159"/>
        <dbReference type="ChEBI" id="CHEBI:15377"/>
        <dbReference type="ChEBI" id="CHEBI:15378"/>
        <dbReference type="ChEBI" id="CHEBI:52640"/>
        <dbReference type="ChEBI" id="CHEBI:58608"/>
        <dbReference type="ChEBI" id="CHEBI:62537"/>
        <dbReference type="EC" id="3.1.4.54"/>
    </reaction>
</comment>
<comment type="catalytic activity">
    <reaction evidence="2">
        <text>N-butanoyl-1-hexadecanoyl-2-(9Z,12Z-octadecadienoyl)-sn-glycero-3-phosphoethanolamine + H2O = N-butanoyl ethanolamine + 1-hexadecanoyl-2-(9Z,12Z-octadecadienoyl)-sn-glycero-3-phosphate + H(+)</text>
        <dbReference type="Rhea" id="RHEA:45620"/>
        <dbReference type="ChEBI" id="CHEBI:15377"/>
        <dbReference type="ChEBI" id="CHEBI:15378"/>
        <dbReference type="ChEBI" id="CHEBI:72860"/>
        <dbReference type="ChEBI" id="CHEBI:85298"/>
        <dbReference type="ChEBI" id="CHEBI:85304"/>
    </reaction>
    <physiologicalReaction direction="left-to-right" evidence="2">
        <dbReference type="Rhea" id="RHEA:45621"/>
    </physiologicalReaction>
</comment>
<comment type="catalytic activity">
    <reaction evidence="2">
        <text>N-hexanoyl-1-hexadecanoyl-2-(9Z,12Z-octadecadienoyl)-sn-glycero-3-phosphoethanolamine + H2O = N-hexanoyl ethanolamine + 1-hexadecanoyl-2-(9Z,12Z-octadecadienoyl)-sn-glycero-3-phosphate + H(+)</text>
        <dbReference type="Rhea" id="RHEA:45616"/>
        <dbReference type="ChEBI" id="CHEBI:15377"/>
        <dbReference type="ChEBI" id="CHEBI:15378"/>
        <dbReference type="ChEBI" id="CHEBI:72860"/>
        <dbReference type="ChEBI" id="CHEBI:85297"/>
        <dbReference type="ChEBI" id="CHEBI:85303"/>
    </reaction>
    <physiologicalReaction direction="left-to-right" evidence="2">
        <dbReference type="Rhea" id="RHEA:45617"/>
    </physiologicalReaction>
</comment>
<comment type="catalytic activity">
    <reaction evidence="2">
        <text>N-octanoyl-1-hexadecanoyl-2-(9Z,12Z-octadecadienoyl)-sn-glycero-3-phosphoethanolamine + H2O = N-octanoyl ethanolamine + 1-hexadecanoyl-2-(9Z,12Z-octadecadienoyl)-sn-glycero-3-phosphate + H(+)</text>
        <dbReference type="Rhea" id="RHEA:45612"/>
        <dbReference type="ChEBI" id="CHEBI:15377"/>
        <dbReference type="ChEBI" id="CHEBI:15378"/>
        <dbReference type="ChEBI" id="CHEBI:72860"/>
        <dbReference type="ChEBI" id="CHEBI:85296"/>
        <dbReference type="ChEBI" id="CHEBI:85302"/>
    </reaction>
    <physiologicalReaction direction="left-to-right" evidence="2">
        <dbReference type="Rhea" id="RHEA:45613"/>
    </physiologicalReaction>
</comment>
<comment type="catalytic activity">
    <reaction evidence="2">
        <text>N-decanoyl-1-hexadecanoyl-2-(9Z,12Z-octadecadienoyl)-sn-glycero-3-phosphoethanolamine + H2O = N-decanoyl ethanolamine + 1-hexadecanoyl-2-(9Z,12Z-octadecadienoyl)-sn-glycero-3-phosphate + H(+)</text>
        <dbReference type="Rhea" id="RHEA:45608"/>
        <dbReference type="ChEBI" id="CHEBI:15377"/>
        <dbReference type="ChEBI" id="CHEBI:15378"/>
        <dbReference type="ChEBI" id="CHEBI:72860"/>
        <dbReference type="ChEBI" id="CHEBI:85295"/>
        <dbReference type="ChEBI" id="CHEBI:85301"/>
    </reaction>
    <physiologicalReaction direction="left-to-right" evidence="2">
        <dbReference type="Rhea" id="RHEA:45609"/>
    </physiologicalReaction>
</comment>
<comment type="catalytic activity">
    <reaction evidence="2">
        <text>N-dodecanoyl-1,2-di-(9Z-octadecenoyl)-sn-glycero-3-phosphoethanolamine + H2O = N-dodecanoylethanolamine + 1,2-di-(9Z-octadecenoyl)-sn-glycero-3-phosphate + H(+)</text>
        <dbReference type="Rhea" id="RHEA:45556"/>
        <dbReference type="ChEBI" id="CHEBI:15377"/>
        <dbReference type="ChEBI" id="CHEBI:15378"/>
        <dbReference type="ChEBI" id="CHEBI:74546"/>
        <dbReference type="ChEBI" id="CHEBI:85263"/>
        <dbReference type="ChEBI" id="CHEBI:85294"/>
    </reaction>
    <physiologicalReaction direction="left-to-right" evidence="2">
        <dbReference type="Rhea" id="RHEA:45557"/>
    </physiologicalReaction>
</comment>
<comment type="catalytic activity">
    <reaction evidence="2">
        <text>N-tetradecanoyl-1,2-di-(9Z-octadecenoyl)-sn-glycero-3-phosphoethanolamine + H2O = N-tetradecanoylethanolamine + 1,2-di-(9Z-octadecenoyl)-sn-glycero-3-phosphate + H(+)</text>
        <dbReference type="Rhea" id="RHEA:45552"/>
        <dbReference type="ChEBI" id="CHEBI:15377"/>
        <dbReference type="ChEBI" id="CHEBI:15378"/>
        <dbReference type="ChEBI" id="CHEBI:74546"/>
        <dbReference type="ChEBI" id="CHEBI:85262"/>
        <dbReference type="ChEBI" id="CHEBI:85293"/>
    </reaction>
    <physiologicalReaction direction="left-to-right" evidence="2">
        <dbReference type="Rhea" id="RHEA:45553"/>
    </physiologicalReaction>
</comment>
<comment type="catalytic activity">
    <reaction evidence="1">
        <text>N-hexadecanoyl-1,2-di-(9Z-octadecenoyl)-sn-glycero-3-phosphoethanolamine + H2O = N-hexadecanoylethanolamine + 1,2-di-(9Z-octadecenoyl)-sn-glycero-3-phosphate + H(+)</text>
        <dbReference type="Rhea" id="RHEA:45540"/>
        <dbReference type="ChEBI" id="CHEBI:15377"/>
        <dbReference type="ChEBI" id="CHEBI:15378"/>
        <dbReference type="ChEBI" id="CHEBI:71464"/>
        <dbReference type="ChEBI" id="CHEBI:74546"/>
        <dbReference type="ChEBI" id="CHEBI:78097"/>
    </reaction>
    <physiologicalReaction direction="left-to-right" evidence="1">
        <dbReference type="Rhea" id="RHEA:45541"/>
    </physiologicalReaction>
</comment>
<comment type="catalytic activity">
    <reaction evidence="3">
        <text>N,1-dihexadecanoyl-2-(9Z,12Z-octadecadienoyl)-sn-glycero-3-phosphoethanolamine + H2O = 1-hexadecanoyl-2-(9Z,12Z-octadecadienoyl)-sn-glycero-3-phosphate + N-hexadecanoylethanolamine + H(+)</text>
        <dbReference type="Rhea" id="RHEA:45596"/>
        <dbReference type="ChEBI" id="CHEBI:15377"/>
        <dbReference type="ChEBI" id="CHEBI:15378"/>
        <dbReference type="ChEBI" id="CHEBI:71464"/>
        <dbReference type="ChEBI" id="CHEBI:72860"/>
        <dbReference type="ChEBI" id="CHEBI:85334"/>
    </reaction>
    <physiologicalReaction direction="left-to-right" evidence="3">
        <dbReference type="Rhea" id="RHEA:45597"/>
    </physiologicalReaction>
</comment>
<comment type="catalytic activity">
    <reaction evidence="2 3">
        <text>N-octadecanoyl-1,2-di-(9Z-octadecenoyl)-sn-glycero-3-phosphoethanolamine + H2O = N-octadecanoyl ethanolamine + 1,2-di-(9Z-octadecenoyl)-sn-glycero-3-phosphate + H(+)</text>
        <dbReference type="Rhea" id="RHEA:45536"/>
        <dbReference type="ChEBI" id="CHEBI:15377"/>
        <dbReference type="ChEBI" id="CHEBI:15378"/>
        <dbReference type="ChEBI" id="CHEBI:74546"/>
        <dbReference type="ChEBI" id="CHEBI:85292"/>
        <dbReference type="ChEBI" id="CHEBI:85299"/>
    </reaction>
    <physiologicalReaction direction="left-to-right" evidence="2 3">
        <dbReference type="Rhea" id="RHEA:45537"/>
    </physiologicalReaction>
</comment>
<comment type="catalytic activity">
    <reaction evidence="2 3">
        <text>N,1,2-tri-(9Z-octadecenoyl)-sn-glycero-3-phosphoethanolamine + H2O = N-(9Z-octadecenoyl) ethanolamine + 1,2-di-(9Z-octadecenoyl)-sn-glycero-3-phosphate + H(+)</text>
        <dbReference type="Rhea" id="RHEA:45532"/>
        <dbReference type="ChEBI" id="CHEBI:15377"/>
        <dbReference type="ChEBI" id="CHEBI:15378"/>
        <dbReference type="ChEBI" id="CHEBI:71466"/>
        <dbReference type="ChEBI" id="CHEBI:74546"/>
        <dbReference type="ChEBI" id="CHEBI:85291"/>
    </reaction>
    <physiologicalReaction direction="left-to-right" evidence="2 3">
        <dbReference type="Rhea" id="RHEA:45533"/>
    </physiologicalReaction>
</comment>
<comment type="catalytic activity">
    <reaction evidence="1">
        <text>N-(5Z,8Z,11Z,14Z-eicosatetraenoyl)-1,2-diacyl-sn-glycero-3-phosphoethanolamine + H2O = N-(5Z,8Z,11Z,14Z-eicosatetraenoyl)-ethanolamine + a 1,2-diacyl-sn-glycero-3-phosphate + H(+)</text>
        <dbReference type="Rhea" id="RHEA:56548"/>
        <dbReference type="ChEBI" id="CHEBI:2700"/>
        <dbReference type="ChEBI" id="CHEBI:15377"/>
        <dbReference type="ChEBI" id="CHEBI:15378"/>
        <dbReference type="ChEBI" id="CHEBI:58608"/>
        <dbReference type="ChEBI" id="CHEBI:140532"/>
    </reaction>
    <physiologicalReaction direction="left-to-right" evidence="1">
        <dbReference type="Rhea" id="RHEA:56549"/>
    </physiologicalReaction>
</comment>
<comment type="catalytic activity">
    <reaction evidence="2 3">
        <text>N-(5Z,8Z,11Z,14Z-eicosatetraenoyl)-1,2-di-(9Z-octadecenoyl)-sn-glycero-3-phosphoethanolamine + H2O = N-(5Z,8Z,11Z,14Z-eicosatetraenoyl)-ethanolamine + 1,2-di-(9Z-octadecenoyl)-sn-glycero-3-phosphate + H(+)</text>
        <dbReference type="Rhea" id="RHEA:45528"/>
        <dbReference type="ChEBI" id="CHEBI:2700"/>
        <dbReference type="ChEBI" id="CHEBI:15377"/>
        <dbReference type="ChEBI" id="CHEBI:15378"/>
        <dbReference type="ChEBI" id="CHEBI:74546"/>
        <dbReference type="ChEBI" id="CHEBI:85277"/>
    </reaction>
    <physiologicalReaction direction="left-to-right" evidence="2 3">
        <dbReference type="Rhea" id="RHEA:45529"/>
    </physiologicalReaction>
</comment>
<comment type="catalytic activity">
    <reaction evidence="3">
        <text>1-O-(1Z-octadecenoyl)-2-(9Z-octadecenoyl)-sn-glycero-3-phospho-N-hexadecanoyl-ethanolamine + H2O = 1-O-(1Z-octadecenoyl)-2-(9Z-octadecenoyl)-sn-glycero-3-phosphate + N-hexadecanoylethanolamine + H(+)</text>
        <dbReference type="Rhea" id="RHEA:56464"/>
        <dbReference type="ChEBI" id="CHEBI:15377"/>
        <dbReference type="ChEBI" id="CHEBI:15378"/>
        <dbReference type="ChEBI" id="CHEBI:71464"/>
        <dbReference type="ChEBI" id="CHEBI:138663"/>
        <dbReference type="ChEBI" id="CHEBI:140452"/>
    </reaction>
    <physiologicalReaction direction="left-to-right" evidence="3">
        <dbReference type="Rhea" id="RHEA:56465"/>
    </physiologicalReaction>
</comment>
<comment type="catalytic activity">
    <reaction evidence="3">
        <text>N,1-diacyl-sn-glycero-3-phosphoethanolamine + H2O = an N-acylethanolamine + a 1-acyl-sn-glycero-3-phosphate + H(+)</text>
        <dbReference type="Rhea" id="RHEA:53164"/>
        <dbReference type="ChEBI" id="CHEBI:15377"/>
        <dbReference type="ChEBI" id="CHEBI:15378"/>
        <dbReference type="ChEBI" id="CHEBI:52640"/>
        <dbReference type="ChEBI" id="CHEBI:57970"/>
        <dbReference type="ChEBI" id="CHEBI:85216"/>
    </reaction>
    <physiologicalReaction direction="left-to-right" evidence="3">
        <dbReference type="Rhea" id="RHEA:53165"/>
    </physiologicalReaction>
</comment>
<comment type="catalytic activity">
    <reaction evidence="3">
        <text>N,1-dihexadecanoyl-sn-glycero-3-phosphoethanolamine + H2O = N-hexadecanoylethanolamine + 1-hexadecanoyl-sn-glycero-3-phosphate + H(+)</text>
        <dbReference type="Rhea" id="RHEA:45592"/>
        <dbReference type="ChEBI" id="CHEBI:15377"/>
        <dbReference type="ChEBI" id="CHEBI:15378"/>
        <dbReference type="ChEBI" id="CHEBI:57518"/>
        <dbReference type="ChEBI" id="CHEBI:71464"/>
        <dbReference type="ChEBI" id="CHEBI:85335"/>
    </reaction>
    <physiologicalReaction direction="left-to-right" evidence="3">
        <dbReference type="Rhea" id="RHEA:45593"/>
    </physiologicalReaction>
</comment>
<comment type="catalytic activity">
    <reaction evidence="3">
        <text>N-(5Z,8Z,11Z,14Z-eicosatetraenoyl)-1-(9Z-octadecenoyl)-sn-glycero-3-phosphoethanolamine + H2O = N-(5Z,8Z,11Z,14Z-eicosatetraenoyl)-ethanolamine + 1-(9Z-octadecenoyl)-sn-glycero-3-phosphate + H(+)</text>
        <dbReference type="Rhea" id="RHEA:45544"/>
        <dbReference type="ChEBI" id="CHEBI:2700"/>
        <dbReference type="ChEBI" id="CHEBI:15377"/>
        <dbReference type="ChEBI" id="CHEBI:15378"/>
        <dbReference type="ChEBI" id="CHEBI:74544"/>
        <dbReference type="ChEBI" id="CHEBI:85223"/>
    </reaction>
    <physiologicalReaction direction="left-to-right" evidence="3">
        <dbReference type="Rhea" id="RHEA:45545"/>
    </physiologicalReaction>
</comment>
<comment type="cofactor">
    <cofactor evidence="1">
        <name>Zn(2+)</name>
        <dbReference type="ChEBI" id="CHEBI:29105"/>
    </cofactor>
    <text evidence="1">Binds 2 zinc divalent cations per subunit.</text>
</comment>
<comment type="activity regulation">
    <text evidence="1">Activated by divalent cations. Activated by bile acids.</text>
</comment>
<comment type="subunit">
    <text evidence="1">Homodimer. Bile acids promote the assembly of inactive monomers into an active dimer and enable catalysis.</text>
</comment>
<comment type="subcellular location">
    <subcellularLocation>
        <location evidence="1">Golgi apparatus membrane</location>
        <topology evidence="1">Peripheral membrane protein</topology>
    </subcellularLocation>
    <subcellularLocation>
        <location evidence="1">Early endosome membrane</location>
        <topology evidence="1">Peripheral membrane protein</topology>
    </subcellularLocation>
    <subcellularLocation>
        <location evidence="1">Nucleus envelope</location>
    </subcellularLocation>
    <subcellularLocation>
        <location evidence="1">Nucleus</location>
        <location evidence="1">Nucleoplasm</location>
    </subcellularLocation>
    <text evidence="1">Localized in the proximity of the cellular membranes likely through interaction with membrane phospholipids.</text>
</comment>
<comment type="tissue specificity">
    <text evidence="3">Widely expressed. Highest expression in brain, kidney and testis (at protein level). Expressed in adipose tissue (at protein level).</text>
</comment>
<comment type="similarity">
    <text evidence="5">Belongs to the NAPE-PLD family.</text>
</comment>
<accession>Q58CN9</accession>
<dbReference type="EC" id="3.1.4.54" evidence="1 3"/>
<dbReference type="EMBL" id="BT021908">
    <property type="protein sequence ID" value="AAX46755.1"/>
    <property type="molecule type" value="mRNA"/>
</dbReference>
<dbReference type="RefSeq" id="NP_001015680.1">
    <property type="nucleotide sequence ID" value="NM_001015680.1"/>
</dbReference>
<dbReference type="RefSeq" id="XP_010802479.1">
    <property type="nucleotide sequence ID" value="XM_010804177.1"/>
</dbReference>
<dbReference type="RefSeq" id="XP_024846643.1">
    <property type="nucleotide sequence ID" value="XM_024990875.2"/>
</dbReference>
<dbReference type="RefSeq" id="XP_024846646.1">
    <property type="nucleotide sequence ID" value="XM_024990878.2"/>
</dbReference>
<dbReference type="SMR" id="Q58CN9"/>
<dbReference type="FunCoup" id="Q58CN9">
    <property type="interactions" value="789"/>
</dbReference>
<dbReference type="STRING" id="9913.ENSBTAP00000067871"/>
<dbReference type="PaxDb" id="9913-ENSBTAP00000018833"/>
<dbReference type="GeneID" id="541291"/>
<dbReference type="KEGG" id="bta:541291"/>
<dbReference type="CTD" id="222236"/>
<dbReference type="VEuPathDB" id="HostDB:ENSBTAG00000014171"/>
<dbReference type="eggNOG" id="KOG3798">
    <property type="taxonomic scope" value="Eukaryota"/>
</dbReference>
<dbReference type="HOGENOM" id="CLU_020884_2_1_1"/>
<dbReference type="InParanoid" id="Q58CN9"/>
<dbReference type="OMA" id="QHWTRRT"/>
<dbReference type="OrthoDB" id="332863at2759"/>
<dbReference type="TreeFam" id="TF313520"/>
<dbReference type="Proteomes" id="UP000009136">
    <property type="component" value="Chromosome 4"/>
</dbReference>
<dbReference type="Bgee" id="ENSBTAG00000014171">
    <property type="expression patterns" value="Expressed in oocyte and 109 other cell types or tissues"/>
</dbReference>
<dbReference type="GO" id="GO:0005737">
    <property type="term" value="C:cytoplasm"/>
    <property type="evidence" value="ECO:0000318"/>
    <property type="project" value="GO_Central"/>
</dbReference>
<dbReference type="GO" id="GO:0005769">
    <property type="term" value="C:early endosome"/>
    <property type="evidence" value="ECO:0000314"/>
    <property type="project" value="UniProtKB"/>
</dbReference>
<dbReference type="GO" id="GO:0031901">
    <property type="term" value="C:early endosome membrane"/>
    <property type="evidence" value="ECO:0007669"/>
    <property type="project" value="UniProtKB-SubCell"/>
</dbReference>
<dbReference type="GO" id="GO:0005794">
    <property type="term" value="C:Golgi apparatus"/>
    <property type="evidence" value="ECO:0000250"/>
    <property type="project" value="UniProtKB"/>
</dbReference>
<dbReference type="GO" id="GO:0000139">
    <property type="term" value="C:Golgi membrane"/>
    <property type="evidence" value="ECO:0007669"/>
    <property type="project" value="UniProtKB-SubCell"/>
</dbReference>
<dbReference type="GO" id="GO:0043005">
    <property type="term" value="C:neuron projection"/>
    <property type="evidence" value="ECO:0000318"/>
    <property type="project" value="GO_Central"/>
</dbReference>
<dbReference type="GO" id="GO:0043025">
    <property type="term" value="C:neuronal cell body"/>
    <property type="evidence" value="ECO:0000318"/>
    <property type="project" value="GO_Central"/>
</dbReference>
<dbReference type="GO" id="GO:0005635">
    <property type="term" value="C:nuclear envelope"/>
    <property type="evidence" value="ECO:0000314"/>
    <property type="project" value="UniProtKB"/>
</dbReference>
<dbReference type="GO" id="GO:0005654">
    <property type="term" value="C:nucleoplasm"/>
    <property type="evidence" value="ECO:0000314"/>
    <property type="project" value="UniProtKB"/>
</dbReference>
<dbReference type="GO" id="GO:0070290">
    <property type="term" value="F:N-acylphosphatidylethanolamine-specific phospholipase D activity"/>
    <property type="evidence" value="ECO:0000250"/>
    <property type="project" value="UniProtKB"/>
</dbReference>
<dbReference type="GO" id="GO:0008270">
    <property type="term" value="F:zinc ion binding"/>
    <property type="evidence" value="ECO:0000250"/>
    <property type="project" value="UniProtKB"/>
</dbReference>
<dbReference type="GO" id="GO:0048874">
    <property type="term" value="P:host-mediated regulation of intestinal microbiota composition"/>
    <property type="evidence" value="ECO:0000250"/>
    <property type="project" value="UniProtKB"/>
</dbReference>
<dbReference type="GO" id="GO:0070291">
    <property type="term" value="P:N-acylethanolamine metabolic process"/>
    <property type="evidence" value="ECO:0000318"/>
    <property type="project" value="GO_Central"/>
</dbReference>
<dbReference type="GO" id="GO:0070292">
    <property type="term" value="P:N-acylphosphatidylethanolamine metabolic process"/>
    <property type="evidence" value="ECO:0000250"/>
    <property type="project" value="UniProtKB"/>
</dbReference>
<dbReference type="GO" id="GO:0009395">
    <property type="term" value="P:phospholipid catabolic process"/>
    <property type="evidence" value="ECO:0007669"/>
    <property type="project" value="UniProtKB-KW"/>
</dbReference>
<dbReference type="GO" id="GO:0090336">
    <property type="term" value="P:positive regulation of brown fat cell differentiation"/>
    <property type="evidence" value="ECO:0000250"/>
    <property type="project" value="UniProtKB"/>
</dbReference>
<dbReference type="GO" id="GO:0050729">
    <property type="term" value="P:positive regulation of inflammatory response"/>
    <property type="evidence" value="ECO:0000250"/>
    <property type="project" value="UniProtKB"/>
</dbReference>
<dbReference type="GO" id="GO:0001659">
    <property type="term" value="P:temperature homeostasis"/>
    <property type="evidence" value="ECO:0000250"/>
    <property type="project" value="UniProtKB"/>
</dbReference>
<dbReference type="FunFam" id="3.60.15.10:FF:000016">
    <property type="entry name" value="N-acyl-phosphatidylethanolamine-hydrolyzing phospholipase D, putative"/>
    <property type="match status" value="1"/>
</dbReference>
<dbReference type="Gene3D" id="3.60.15.10">
    <property type="entry name" value="Ribonuclease Z/Hydroxyacylglutathione hydrolase-like"/>
    <property type="match status" value="1"/>
</dbReference>
<dbReference type="InterPro" id="IPR001279">
    <property type="entry name" value="Metallo-B-lactamas"/>
</dbReference>
<dbReference type="InterPro" id="IPR024884">
    <property type="entry name" value="NAPE-PLD"/>
</dbReference>
<dbReference type="InterPro" id="IPR036866">
    <property type="entry name" value="RibonucZ/Hydroxyglut_hydro"/>
</dbReference>
<dbReference type="PANTHER" id="PTHR15032">
    <property type="entry name" value="N-ACYL-PHOSPHATIDYLETHANOLAMINE-HYDROLYZING PHOSPHOLIPASE D"/>
    <property type="match status" value="1"/>
</dbReference>
<dbReference type="PANTHER" id="PTHR15032:SF4">
    <property type="entry name" value="N-ACYL-PHOSPHATIDYLETHANOLAMINE-HYDROLYZING PHOSPHOLIPASE D"/>
    <property type="match status" value="1"/>
</dbReference>
<dbReference type="Pfam" id="PF12706">
    <property type="entry name" value="Lactamase_B_2"/>
    <property type="match status" value="1"/>
</dbReference>
<dbReference type="PIRSF" id="PIRSF038896">
    <property type="entry name" value="NAPE-PLD"/>
    <property type="match status" value="1"/>
</dbReference>
<dbReference type="SUPFAM" id="SSF56281">
    <property type="entry name" value="Metallo-hydrolase/oxidoreductase"/>
    <property type="match status" value="1"/>
</dbReference>
<reference key="1">
    <citation type="journal article" date="2005" name="BMC Genomics">
        <title>Characterization of 954 bovine full-CDS cDNA sequences.</title>
        <authorList>
            <person name="Harhay G.P."/>
            <person name="Sonstegard T.S."/>
            <person name="Keele J.W."/>
            <person name="Heaton M.P."/>
            <person name="Clawson M.L."/>
            <person name="Snelling W.M."/>
            <person name="Wiedmann R.T."/>
            <person name="Van Tassell C.P."/>
            <person name="Smith T.P.L."/>
        </authorList>
    </citation>
    <scope>NUCLEOTIDE SEQUENCE [LARGE SCALE MRNA]</scope>
</reference>
<feature type="chain" id="PRO_0000318158" description="N-acyl-phosphatidylethanolamine-hydrolyzing phospholipase D">
    <location>
        <begin position="1"/>
        <end position="392"/>
    </location>
</feature>
<feature type="region of interest" description="Disordered" evidence="4">
    <location>
        <begin position="1"/>
        <end position="39"/>
    </location>
</feature>
<feature type="compositionally biased region" description="Polar residues" evidence="4">
    <location>
        <begin position="1"/>
        <end position="16"/>
    </location>
</feature>
<feature type="compositionally biased region" description="Low complexity" evidence="4">
    <location>
        <begin position="27"/>
        <end position="36"/>
    </location>
</feature>
<feature type="binding site" evidence="1">
    <location>
        <position position="183"/>
    </location>
    <ligand>
        <name>Zn(2+)</name>
        <dbReference type="ChEBI" id="CHEBI:29105"/>
        <label>1</label>
    </ligand>
</feature>
<feature type="binding site" evidence="1">
    <location>
        <position position="185"/>
    </location>
    <ligand>
        <name>Zn(2+)</name>
        <dbReference type="ChEBI" id="CHEBI:29105"/>
        <label>1</label>
    </ligand>
</feature>
<feature type="binding site" evidence="1">
    <location>
        <position position="186"/>
    </location>
    <ligand>
        <name>an N-acyl-1,2-diacyl-sn-glycero-3-phosphoethanolamine</name>
        <dbReference type="ChEBI" id="CHEBI:62537"/>
    </ligand>
</feature>
<feature type="binding site" evidence="1">
    <location>
        <position position="187"/>
    </location>
    <ligand>
        <name>Zn(2+)</name>
        <dbReference type="ChEBI" id="CHEBI:29105"/>
        <label>2</label>
    </ligand>
</feature>
<feature type="binding site" evidence="1">
    <location>
        <position position="188"/>
    </location>
    <ligand>
        <name>Zn(2+)</name>
        <dbReference type="ChEBI" id="CHEBI:29105"/>
        <label>2</label>
    </ligand>
</feature>
<feature type="binding site" evidence="1">
    <location>
        <position position="251"/>
    </location>
    <ligand>
        <name>Zn(2+)</name>
        <dbReference type="ChEBI" id="CHEBI:29105"/>
        <label>1</label>
    </ligand>
</feature>
<feature type="binding site" evidence="1">
    <location>
        <position position="254"/>
    </location>
    <ligand>
        <name>deoxycholate</name>
        <dbReference type="ChEBI" id="CHEBI:23614"/>
    </ligand>
</feature>
<feature type="binding site" evidence="1">
    <location>
        <position position="258"/>
    </location>
    <ligand>
        <name>deoxycholate</name>
        <dbReference type="ChEBI" id="CHEBI:23614"/>
    </ligand>
</feature>
<feature type="binding site" evidence="1">
    <location>
        <position position="282"/>
    </location>
    <ligand>
        <name>Zn(2+)</name>
        <dbReference type="ChEBI" id="CHEBI:29105"/>
        <label>1</label>
    </ligand>
</feature>
<feature type="binding site" evidence="1">
    <location>
        <position position="282"/>
    </location>
    <ligand>
        <name>Zn(2+)</name>
        <dbReference type="ChEBI" id="CHEBI:29105"/>
        <label>2</label>
    </ligand>
</feature>
<feature type="binding site" evidence="1">
    <location>
        <position position="319"/>
    </location>
    <ligand>
        <name>an N-acyl-1,2-diacyl-sn-glycero-3-phosphoethanolamine</name>
        <dbReference type="ChEBI" id="CHEBI:62537"/>
    </ligand>
</feature>
<feature type="binding site" evidence="1">
    <location>
        <position position="341"/>
    </location>
    <ligand>
        <name>Zn(2+)</name>
        <dbReference type="ChEBI" id="CHEBI:29105"/>
        <label>2</label>
    </ligand>
</feature>
<feature type="binding site" evidence="1">
    <location>
        <position position="346"/>
    </location>
    <ligand>
        <name>deoxycholate</name>
        <dbReference type="ChEBI" id="CHEBI:23614"/>
    </ligand>
</feature>
<feature type="modified residue" description="N-acetylmethionine" evidence="1">
    <location>
        <position position="1"/>
    </location>
</feature>
<protein>
    <recommendedName>
        <fullName>N-acyl-phosphatidylethanolamine-hydrolyzing phospholipase D</fullName>
        <shortName>N-acyl phosphatidylethanolamine phospholipase D</shortName>
        <shortName>NAPE-PLD</shortName>
        <shortName>NAPE-hydrolyzing phospholipase D</shortName>
        <ecNumber evidence="1 3">3.1.4.54</ecNumber>
    </recommendedName>
</protein>
<sequence length="392" mass="45341">MDENETNQLLMTSNQYPKEAVRKRQNSRNSGGSDSSRFSRKSFKLDYRLEEDVTKSKKGKDGRFVNPWPTWKNPSIPSLLRWVITERDHSSVPCSKELDKELPVLKPYFIDDPEEAGVRGAGLRVTWLGHATVMVEMDELILLTDPIFSARASPSQRMGPKRFRRAPCTVEELPRIDAVLVSHNHYDHLDCNSVIALNERFGNELRWFVPLGLLDWMQKCGCENVIELDWWEENCVPGHDKVTFVFTPSQHWCKRTLMDDNKVLWGSWSVLGPWNRFFFAGDTGYCSAFEEIGKRFGPFDLAAIPIGAYEPRWFMKYQHVDPEEAVKIHIDVQAKKSVAIHWGTFALANEHYLEPPAKLCEALEKYRLKTEDFLVLKHGESRYLNTDDEDVE</sequence>
<keyword id="KW-0007">Acetylation</keyword>
<keyword id="KW-0967">Endosome</keyword>
<keyword id="KW-0333">Golgi apparatus</keyword>
<keyword id="KW-0378">Hydrolase</keyword>
<keyword id="KW-0442">Lipid degradation</keyword>
<keyword id="KW-0443">Lipid metabolism</keyword>
<keyword id="KW-0472">Membrane</keyword>
<keyword id="KW-0479">Metal-binding</keyword>
<keyword id="KW-0539">Nucleus</keyword>
<keyword id="KW-0595">Phospholipid degradation</keyword>
<keyword id="KW-1208">Phospholipid metabolism</keyword>
<keyword id="KW-1185">Reference proteome</keyword>
<keyword id="KW-0862">Zinc</keyword>
<name>NAPEP_BOVIN</name>
<gene>
    <name type="primary">NAPEPLD</name>
</gene>
<proteinExistence type="evidence at transcript level"/>